<gene>
    <name evidence="1" type="primary">rbcL</name>
</gene>
<name>RBL_APIGR</name>
<geneLocation type="chloroplast"/>
<comment type="function">
    <text evidence="1">RuBisCO catalyzes two reactions: the carboxylation of D-ribulose 1,5-bisphosphate, the primary event in carbon dioxide fixation, as well as the oxidative fragmentation of the pentose substrate in the photorespiration process. Both reactions occur simultaneously and in competition at the same active site.</text>
</comment>
<comment type="catalytic activity">
    <reaction evidence="1">
        <text>2 (2R)-3-phosphoglycerate + 2 H(+) = D-ribulose 1,5-bisphosphate + CO2 + H2O</text>
        <dbReference type="Rhea" id="RHEA:23124"/>
        <dbReference type="ChEBI" id="CHEBI:15377"/>
        <dbReference type="ChEBI" id="CHEBI:15378"/>
        <dbReference type="ChEBI" id="CHEBI:16526"/>
        <dbReference type="ChEBI" id="CHEBI:57870"/>
        <dbReference type="ChEBI" id="CHEBI:58272"/>
        <dbReference type="EC" id="4.1.1.39"/>
    </reaction>
</comment>
<comment type="catalytic activity">
    <reaction evidence="1">
        <text>D-ribulose 1,5-bisphosphate + O2 = 2-phosphoglycolate + (2R)-3-phosphoglycerate + 2 H(+)</text>
        <dbReference type="Rhea" id="RHEA:36631"/>
        <dbReference type="ChEBI" id="CHEBI:15378"/>
        <dbReference type="ChEBI" id="CHEBI:15379"/>
        <dbReference type="ChEBI" id="CHEBI:57870"/>
        <dbReference type="ChEBI" id="CHEBI:58033"/>
        <dbReference type="ChEBI" id="CHEBI:58272"/>
    </reaction>
</comment>
<comment type="cofactor">
    <cofactor evidence="1">
        <name>Mg(2+)</name>
        <dbReference type="ChEBI" id="CHEBI:18420"/>
    </cofactor>
    <text evidence="1">Binds 1 Mg(2+) ion per subunit.</text>
</comment>
<comment type="subunit">
    <text evidence="1">Heterohexadecamer of 8 large chains and 8 small chains; disulfide-linked. The disulfide link is formed within the large subunit homodimers.</text>
</comment>
<comment type="subcellular location">
    <subcellularLocation>
        <location>Plastid</location>
        <location>Chloroplast</location>
    </subcellularLocation>
</comment>
<comment type="PTM">
    <text evidence="1">The disulfide bond which can form in the large chain dimeric partners within the hexadecamer appears to be associated with oxidative stress and protein turnover.</text>
</comment>
<comment type="miscellaneous">
    <text evidence="1">The basic functional RuBisCO is composed of a large chain homodimer in a 'head-to-tail' conformation. In form I RuBisCO this homodimer is arranged in a barrel-like tetramer with the small subunits forming a tetrameric 'cap' on each end of the 'barrel'.</text>
</comment>
<comment type="similarity">
    <text evidence="1">Belongs to the RuBisCO large chain family. Type I subfamily.</text>
</comment>
<organism>
    <name type="scientific">Apium graveolens</name>
    <name type="common">Celery</name>
    <dbReference type="NCBI Taxonomy" id="4045"/>
    <lineage>
        <taxon>Eukaryota</taxon>
        <taxon>Viridiplantae</taxon>
        <taxon>Streptophyta</taxon>
        <taxon>Embryophyta</taxon>
        <taxon>Tracheophyta</taxon>
        <taxon>Spermatophyta</taxon>
        <taxon>Magnoliopsida</taxon>
        <taxon>eudicotyledons</taxon>
        <taxon>Gunneridae</taxon>
        <taxon>Pentapetalae</taxon>
        <taxon>asterids</taxon>
        <taxon>campanulids</taxon>
        <taxon>Apiales</taxon>
        <taxon>Apiaceae</taxon>
        <taxon>Apioideae</taxon>
        <taxon>apioid superclade</taxon>
        <taxon>Apieae</taxon>
        <taxon>Apium</taxon>
    </lineage>
</organism>
<accession>P28380</accession>
<proteinExistence type="inferred from homology"/>
<feature type="chain" id="PRO_0000062359" description="Ribulose bisphosphate carboxylase large chain">
    <location>
        <begin position="1" status="less than"/>
        <end position="459" status="greater than"/>
    </location>
</feature>
<feature type="active site" description="Proton acceptor" evidence="1">
    <location>
        <position position="165"/>
    </location>
</feature>
<feature type="active site" description="Proton acceptor" evidence="1">
    <location>
        <position position="284"/>
    </location>
</feature>
<feature type="binding site" description="in homodimeric partner" evidence="1">
    <location>
        <position position="113"/>
    </location>
    <ligand>
        <name>substrate</name>
    </ligand>
</feature>
<feature type="binding site" evidence="1">
    <location>
        <position position="163"/>
    </location>
    <ligand>
        <name>substrate</name>
    </ligand>
</feature>
<feature type="binding site" evidence="1">
    <location>
        <position position="167"/>
    </location>
    <ligand>
        <name>substrate</name>
    </ligand>
</feature>
<feature type="binding site" description="via carbamate group" evidence="1">
    <location>
        <position position="191"/>
    </location>
    <ligand>
        <name>Mg(2+)</name>
        <dbReference type="ChEBI" id="CHEBI:18420"/>
    </ligand>
</feature>
<feature type="binding site" evidence="1">
    <location>
        <position position="193"/>
    </location>
    <ligand>
        <name>Mg(2+)</name>
        <dbReference type="ChEBI" id="CHEBI:18420"/>
    </ligand>
</feature>
<feature type="binding site" evidence="1">
    <location>
        <position position="194"/>
    </location>
    <ligand>
        <name>Mg(2+)</name>
        <dbReference type="ChEBI" id="CHEBI:18420"/>
    </ligand>
</feature>
<feature type="binding site" evidence="1">
    <location>
        <position position="285"/>
    </location>
    <ligand>
        <name>substrate</name>
    </ligand>
</feature>
<feature type="binding site" evidence="1">
    <location>
        <position position="317"/>
    </location>
    <ligand>
        <name>substrate</name>
    </ligand>
</feature>
<feature type="binding site" evidence="1">
    <location>
        <position position="369"/>
    </location>
    <ligand>
        <name>substrate</name>
    </ligand>
</feature>
<feature type="site" description="Transition state stabilizer" evidence="1">
    <location>
        <position position="324"/>
    </location>
</feature>
<feature type="modified residue" description="N6,N6,N6-trimethyllysine" evidence="1">
    <location>
        <position position="4"/>
    </location>
</feature>
<feature type="modified residue" description="N6-carboxylysine" evidence="1">
    <location>
        <position position="191"/>
    </location>
</feature>
<feature type="disulfide bond" description="Interchain; in linked form" evidence="1">
    <location>
        <position position="237"/>
    </location>
</feature>
<feature type="non-terminal residue">
    <location>
        <position position="1"/>
    </location>
</feature>
<feature type="non-terminal residue">
    <location>
        <position position="459"/>
    </location>
</feature>
<keyword id="KW-0113">Calvin cycle</keyword>
<keyword id="KW-0120">Carbon dioxide fixation</keyword>
<keyword id="KW-0150">Chloroplast</keyword>
<keyword id="KW-1015">Disulfide bond</keyword>
<keyword id="KW-0456">Lyase</keyword>
<keyword id="KW-0460">Magnesium</keyword>
<keyword id="KW-0479">Metal-binding</keyword>
<keyword id="KW-0488">Methylation</keyword>
<keyword id="KW-0503">Monooxygenase</keyword>
<keyword id="KW-0560">Oxidoreductase</keyword>
<keyword id="KW-0601">Photorespiration</keyword>
<keyword id="KW-0602">Photosynthesis</keyword>
<keyword id="KW-0934">Plastid</keyword>
<protein>
    <recommendedName>
        <fullName evidence="1">Ribulose bisphosphate carboxylase large chain</fullName>
        <shortName evidence="1">RuBisCO large subunit</shortName>
        <ecNumber evidence="1">4.1.1.39</ecNumber>
    </recommendedName>
</protein>
<sequence length="459" mass="50780">VGFKAGXKDYKLTXXTPEYETKDTDILAAFRXSPQPGVPPEEAGAAVAAXSSTGTWTTVWTDGXTSLXRYKGRCYGIEPVVGEENXXIXYVXYPLDLFEEGSVTNMFTSIVGNVFGFKALRALRLEDLRIPVAYVKTFQGPPHGIQVERDKLNKYGRPLLGCTIKPKLGLSAXNYGRAVYECLRGGLDFTKDDENVNSQPFMRWRDRFLFCAEAIYKAQAETGEIKGHYLNATAGTCEEMMKRAIFARELGVPIVMHDYLTGGFTANTSLAHYCRDNGLLLHIHRAMHAVIDRQKNHGIHFRVLAKALRMSGGDHIHSGTVVGKLEGERDITLGFVDLLRDDFIEKDRSRGIYFTQDWVSLPGVLPVASGGIHVWHMPALTEIFGDDSVLQFGGGTLGHPWGNAPGAVANRVALEACVQARIEGRDLASEGNEIIREATKWSPELAAACEVWKEIKFEF</sequence>
<dbReference type="EC" id="4.1.1.39" evidence="1"/>
<dbReference type="EMBL" id="L01885">
    <property type="protein sequence ID" value="AAA99457.2"/>
    <property type="molecule type" value="Genomic_DNA"/>
</dbReference>
<dbReference type="GO" id="GO:0009507">
    <property type="term" value="C:chloroplast"/>
    <property type="evidence" value="ECO:0007669"/>
    <property type="project" value="UniProtKB-SubCell"/>
</dbReference>
<dbReference type="GO" id="GO:0000287">
    <property type="term" value="F:magnesium ion binding"/>
    <property type="evidence" value="ECO:0007669"/>
    <property type="project" value="InterPro"/>
</dbReference>
<dbReference type="GO" id="GO:0004497">
    <property type="term" value="F:monooxygenase activity"/>
    <property type="evidence" value="ECO:0007669"/>
    <property type="project" value="UniProtKB-KW"/>
</dbReference>
<dbReference type="GO" id="GO:0016984">
    <property type="term" value="F:ribulose-bisphosphate carboxylase activity"/>
    <property type="evidence" value="ECO:0007669"/>
    <property type="project" value="UniProtKB-EC"/>
</dbReference>
<dbReference type="GO" id="GO:0009853">
    <property type="term" value="P:photorespiration"/>
    <property type="evidence" value="ECO:0007669"/>
    <property type="project" value="UniProtKB-KW"/>
</dbReference>
<dbReference type="GO" id="GO:0019253">
    <property type="term" value="P:reductive pentose-phosphate cycle"/>
    <property type="evidence" value="ECO:0007669"/>
    <property type="project" value="UniProtKB-KW"/>
</dbReference>
<dbReference type="CDD" id="cd08212">
    <property type="entry name" value="RuBisCO_large_I"/>
    <property type="match status" value="1"/>
</dbReference>
<dbReference type="FunFam" id="3.20.20.110:FF:000001">
    <property type="entry name" value="Ribulose bisphosphate carboxylase large chain"/>
    <property type="match status" value="1"/>
</dbReference>
<dbReference type="Gene3D" id="3.20.20.110">
    <property type="entry name" value="Ribulose bisphosphate carboxylase, large subunit, C-terminal domain"/>
    <property type="match status" value="1"/>
</dbReference>
<dbReference type="Gene3D" id="3.30.70.150">
    <property type="entry name" value="RuBisCO large subunit, N-terminal domain"/>
    <property type="match status" value="1"/>
</dbReference>
<dbReference type="HAMAP" id="MF_01338">
    <property type="entry name" value="RuBisCO_L_type1"/>
    <property type="match status" value="1"/>
</dbReference>
<dbReference type="InterPro" id="IPR033966">
    <property type="entry name" value="RuBisCO"/>
</dbReference>
<dbReference type="InterPro" id="IPR020878">
    <property type="entry name" value="RuBisCo_large_chain_AS"/>
</dbReference>
<dbReference type="InterPro" id="IPR000685">
    <property type="entry name" value="RuBisCO_lsu_C"/>
</dbReference>
<dbReference type="InterPro" id="IPR036376">
    <property type="entry name" value="RuBisCO_lsu_C_sf"/>
</dbReference>
<dbReference type="InterPro" id="IPR017443">
    <property type="entry name" value="RuBisCO_lsu_fd_N"/>
</dbReference>
<dbReference type="InterPro" id="IPR036422">
    <property type="entry name" value="RuBisCO_lsu_N_sf"/>
</dbReference>
<dbReference type="InterPro" id="IPR020888">
    <property type="entry name" value="RuBisCO_lsuI"/>
</dbReference>
<dbReference type="NCBIfam" id="NF003252">
    <property type="entry name" value="PRK04208.1"/>
    <property type="match status" value="1"/>
</dbReference>
<dbReference type="PANTHER" id="PTHR42704">
    <property type="entry name" value="RIBULOSE BISPHOSPHATE CARBOXYLASE"/>
    <property type="match status" value="1"/>
</dbReference>
<dbReference type="PANTHER" id="PTHR42704:SF15">
    <property type="entry name" value="RIBULOSE BISPHOSPHATE CARBOXYLASE LARGE CHAIN"/>
    <property type="match status" value="1"/>
</dbReference>
<dbReference type="Pfam" id="PF00016">
    <property type="entry name" value="RuBisCO_large"/>
    <property type="match status" value="1"/>
</dbReference>
<dbReference type="Pfam" id="PF02788">
    <property type="entry name" value="RuBisCO_large_N"/>
    <property type="match status" value="1"/>
</dbReference>
<dbReference type="SFLD" id="SFLDS00014">
    <property type="entry name" value="RuBisCO"/>
    <property type="match status" value="1"/>
</dbReference>
<dbReference type="SFLD" id="SFLDG00301">
    <property type="entry name" value="RuBisCO-like_proteins"/>
    <property type="match status" value="1"/>
</dbReference>
<dbReference type="SUPFAM" id="SSF51649">
    <property type="entry name" value="RuBisCo, C-terminal domain"/>
    <property type="match status" value="1"/>
</dbReference>
<dbReference type="SUPFAM" id="SSF54966">
    <property type="entry name" value="RuBisCO, large subunit, small (N-terminal) domain"/>
    <property type="match status" value="1"/>
</dbReference>
<dbReference type="PROSITE" id="PS00157">
    <property type="entry name" value="RUBISCO_LARGE"/>
    <property type="match status" value="1"/>
</dbReference>
<evidence type="ECO:0000255" key="1">
    <source>
        <dbReference type="HAMAP-Rule" id="MF_01338"/>
    </source>
</evidence>
<reference key="1">
    <citation type="journal article" date="1992" name="Science">
        <title>Carnivorous plants: phylogeny and structural evolution.</title>
        <authorList>
            <person name="Albert V.A."/>
            <person name="Williams S.E."/>
            <person name="Chase M.W."/>
        </authorList>
    </citation>
    <scope>NUCLEOTIDE SEQUENCE [GENOMIC DNA]</scope>
</reference>
<reference key="2">
    <citation type="journal article" date="1992" name="Ann. Mo. Bot. Gard.">
        <title>Monophyly of the Asteridae and identification of their major lineages inferred from DNA sequences of rbcL.</title>
        <authorList>
            <person name="Olmstead R.G."/>
            <person name="Michaels H.J."/>
            <person name="Scott K.M."/>
            <person name="Palmer J.D."/>
        </authorList>
        <dbReference type="AGRICOLA" id="IND93014998"/>
    </citation>
    <scope>NUCLEOTIDE SEQUENCE [GENOMIC DNA]</scope>
</reference>